<organism>
    <name type="scientific">Coccidioides immitis (strain RS)</name>
    <name type="common">Valley fever fungus</name>
    <dbReference type="NCBI Taxonomy" id="246410"/>
    <lineage>
        <taxon>Eukaryota</taxon>
        <taxon>Fungi</taxon>
        <taxon>Dikarya</taxon>
        <taxon>Ascomycota</taxon>
        <taxon>Pezizomycotina</taxon>
        <taxon>Eurotiomycetes</taxon>
        <taxon>Eurotiomycetidae</taxon>
        <taxon>Onygenales</taxon>
        <taxon>Onygenaceae</taxon>
        <taxon>Coccidioides</taxon>
    </lineage>
</organism>
<accession>Q1DRB6</accession>
<accession>A0A0D6K9P0</accession>
<accession>J3K3I5</accession>
<dbReference type="EMBL" id="GG704912">
    <property type="protein sequence ID" value="EAS31668.1"/>
    <property type="molecule type" value="Genomic_DNA"/>
</dbReference>
<dbReference type="RefSeq" id="XP_001243251.1">
    <property type="nucleotide sequence ID" value="XM_001243250.2"/>
</dbReference>
<dbReference type="SMR" id="Q1DRB6"/>
<dbReference type="FunCoup" id="Q1DRB6">
    <property type="interactions" value="982"/>
</dbReference>
<dbReference type="STRING" id="246410.Q1DRB6"/>
<dbReference type="GeneID" id="4561045"/>
<dbReference type="KEGG" id="cim:CIMG_07147"/>
<dbReference type="VEuPathDB" id="FungiDB:CIMG_07147"/>
<dbReference type="InParanoid" id="Q1DRB6"/>
<dbReference type="OMA" id="MRPAKGE"/>
<dbReference type="OrthoDB" id="5571054at2759"/>
<dbReference type="Proteomes" id="UP000001261">
    <property type="component" value="Unassembled WGS sequence"/>
</dbReference>
<dbReference type="GO" id="GO:0005654">
    <property type="term" value="C:nucleoplasm"/>
    <property type="evidence" value="ECO:0007669"/>
    <property type="project" value="UniProtKB-SubCell"/>
</dbReference>
<dbReference type="GO" id="GO:0070545">
    <property type="term" value="C:PeBoW complex"/>
    <property type="evidence" value="ECO:0007669"/>
    <property type="project" value="TreeGrafter"/>
</dbReference>
<dbReference type="GO" id="GO:0030687">
    <property type="term" value="C:preribosome, large subunit precursor"/>
    <property type="evidence" value="ECO:0007669"/>
    <property type="project" value="UniProtKB-UniRule"/>
</dbReference>
<dbReference type="GO" id="GO:0043021">
    <property type="term" value="F:ribonucleoprotein complex binding"/>
    <property type="evidence" value="ECO:0007669"/>
    <property type="project" value="UniProtKB-UniRule"/>
</dbReference>
<dbReference type="GO" id="GO:0000466">
    <property type="term" value="P:maturation of 5.8S rRNA from tricistronic rRNA transcript (SSU-rRNA, 5.8S rRNA, LSU-rRNA)"/>
    <property type="evidence" value="ECO:0007669"/>
    <property type="project" value="UniProtKB-UniRule"/>
</dbReference>
<dbReference type="GO" id="GO:0000463">
    <property type="term" value="P:maturation of LSU-rRNA from tricistronic rRNA transcript (SSU-rRNA, 5.8S rRNA, LSU-rRNA)"/>
    <property type="evidence" value="ECO:0007669"/>
    <property type="project" value="UniProtKB-UniRule"/>
</dbReference>
<dbReference type="FunFam" id="2.130.10.10:FF:000061">
    <property type="entry name" value="Ribosome biogenesis protein BOP1 homolog"/>
    <property type="match status" value="1"/>
</dbReference>
<dbReference type="Gene3D" id="2.130.10.10">
    <property type="entry name" value="YVTN repeat-like/Quinoprotein amine dehydrogenase"/>
    <property type="match status" value="1"/>
</dbReference>
<dbReference type="HAMAP" id="MF_03027">
    <property type="entry name" value="BOP1"/>
    <property type="match status" value="1"/>
</dbReference>
<dbReference type="InterPro" id="IPR028598">
    <property type="entry name" value="BOP1/Erb1"/>
</dbReference>
<dbReference type="InterPro" id="IPR012953">
    <property type="entry name" value="BOP1_N_dom"/>
</dbReference>
<dbReference type="InterPro" id="IPR015943">
    <property type="entry name" value="WD40/YVTN_repeat-like_dom_sf"/>
</dbReference>
<dbReference type="InterPro" id="IPR019775">
    <property type="entry name" value="WD40_repeat_CS"/>
</dbReference>
<dbReference type="InterPro" id="IPR036322">
    <property type="entry name" value="WD40_repeat_dom_sf"/>
</dbReference>
<dbReference type="InterPro" id="IPR001680">
    <property type="entry name" value="WD40_rpt"/>
</dbReference>
<dbReference type="PANTHER" id="PTHR17605:SF0">
    <property type="entry name" value="RIBOSOME BIOGENESIS PROTEIN BOP1"/>
    <property type="match status" value="1"/>
</dbReference>
<dbReference type="PANTHER" id="PTHR17605">
    <property type="entry name" value="RIBOSOME BIOGENESIS PROTEIN BOP1 BLOCK OF PROLIFERATION 1 PROTEIN"/>
    <property type="match status" value="1"/>
</dbReference>
<dbReference type="Pfam" id="PF08145">
    <property type="entry name" value="BOP1NT"/>
    <property type="match status" value="1"/>
</dbReference>
<dbReference type="Pfam" id="PF00400">
    <property type="entry name" value="WD40"/>
    <property type="match status" value="3"/>
</dbReference>
<dbReference type="SMART" id="SM01035">
    <property type="entry name" value="BOP1NT"/>
    <property type="match status" value="1"/>
</dbReference>
<dbReference type="SMART" id="SM00320">
    <property type="entry name" value="WD40"/>
    <property type="match status" value="5"/>
</dbReference>
<dbReference type="SUPFAM" id="SSF50978">
    <property type="entry name" value="WD40 repeat-like"/>
    <property type="match status" value="1"/>
</dbReference>
<dbReference type="PROSITE" id="PS00678">
    <property type="entry name" value="WD_REPEATS_1"/>
    <property type="match status" value="1"/>
</dbReference>
<dbReference type="PROSITE" id="PS50082">
    <property type="entry name" value="WD_REPEATS_2"/>
    <property type="match status" value="2"/>
</dbReference>
<dbReference type="PROSITE" id="PS50294">
    <property type="entry name" value="WD_REPEATS_REGION"/>
    <property type="match status" value="2"/>
</dbReference>
<sequence>MTASSGGYQGWERRNNNIPETVGILFLQVRAVSSGKKAAQCRETAPTAGLSESSRPRLFAMDYSKGSKKRKAITKDVDEDPSVVSGDEYDLEALDRNDSDSSADASDSEIELIGDFSSDDGEDDDGEDDDELDSDEVPSDTEPFARVKSGNIATGLDGSLDGESNDLSDDNEPNYRIEKDANGNDRYIYPEINPDDNSEYSEVDEEANTIGDIPLSFYDQYPHIGYNINGKKILRPAKGQALDALLDSIEIPKGWTGLTDPSTGKPLQLSQEELELLRKVQMNEITQDGYDPYQPTIEYFTSKQEIMPLSAAPEPKRRFIPSKHEAKRVMKIVKAIREGRILPYKPPEEEDATQEGIQTYDLWADESPRPDHPMNIPAPKLPPPGYEESYHPPPEYLPDKKEKEEWENQDEEDREREYLPTDYSTLRKVPGYERFVKEKFERCLDLYLAPRVRRSKLNIDPESLLPKLPSPEELKPFPTTCATLFRGHRGRVRSLAIDPTGVWLASGGDDGTVRVWELLTGRQLWSVKLSDEDAVNVVRWRPGKEAVVLAASVGDSIYLAVPDVVNLELEAASLEVIDAGWGYATSTGTSTTKKTSPVQWTRPASSLADSGVYAVIPLGYIAKSISWHRRGDYFVTVCPGTSTPASVAIAIHTLSKHLTQYPFRRRLKGGGSPQVAHFHPSKPILFVANQRSIRAYDLSRQTLVKILRPGARWISSFDIHPTSSSTSGGDNLIVGSYDRRLLWHDVDLSDRPYKTLRYHQKAIRAVKYHPHYPLFADTSDDGSLQIFHGSVTGDLLSNANIVPLKVLKGHKVTGDLGVLDLDWHPREAWCVSAGADGTCRLWM</sequence>
<keyword id="KW-0539">Nucleus</keyword>
<keyword id="KW-1185">Reference proteome</keyword>
<keyword id="KW-0677">Repeat</keyword>
<keyword id="KW-0690">Ribosome biogenesis</keyword>
<keyword id="KW-0698">rRNA processing</keyword>
<keyword id="KW-0853">WD repeat</keyword>
<feature type="chain" id="PRO_0000370426" description="Ribosome biogenesis protein ERB1">
    <location>
        <begin position="1"/>
        <end position="843"/>
    </location>
</feature>
<feature type="repeat" description="WD 1">
    <location>
        <begin position="487"/>
        <end position="526"/>
    </location>
</feature>
<feature type="repeat" description="WD 2">
    <location>
        <begin position="530"/>
        <end position="570"/>
    </location>
</feature>
<feature type="repeat" description="WD 3">
    <location>
        <begin position="668"/>
        <end position="706"/>
    </location>
</feature>
<feature type="repeat" description="WD 4">
    <location>
        <begin position="709"/>
        <end position="754"/>
    </location>
</feature>
<feature type="repeat" description="WD 5">
    <location>
        <begin position="758"/>
        <end position="797"/>
    </location>
</feature>
<feature type="repeat" description="WD 6">
    <location>
        <begin position="813"/>
        <end position="843"/>
    </location>
</feature>
<feature type="region of interest" description="Disordered" evidence="2">
    <location>
        <begin position="36"/>
        <end position="189"/>
    </location>
</feature>
<feature type="region of interest" description="Disordered" evidence="2">
    <location>
        <begin position="364"/>
        <end position="419"/>
    </location>
</feature>
<feature type="compositionally biased region" description="Acidic residues" evidence="2">
    <location>
        <begin position="77"/>
        <end position="92"/>
    </location>
</feature>
<feature type="compositionally biased region" description="Acidic residues" evidence="2">
    <location>
        <begin position="106"/>
        <end position="139"/>
    </location>
</feature>
<feature type="compositionally biased region" description="Acidic residues" evidence="2">
    <location>
        <begin position="163"/>
        <end position="172"/>
    </location>
</feature>
<feature type="compositionally biased region" description="Basic and acidic residues" evidence="2">
    <location>
        <begin position="173"/>
        <end position="183"/>
    </location>
</feature>
<feature type="compositionally biased region" description="Pro residues" evidence="2">
    <location>
        <begin position="379"/>
        <end position="396"/>
    </location>
</feature>
<feature type="compositionally biased region" description="Basic and acidic residues" evidence="2">
    <location>
        <begin position="397"/>
        <end position="406"/>
    </location>
</feature>
<evidence type="ECO:0000255" key="1">
    <source>
        <dbReference type="HAMAP-Rule" id="MF_03027"/>
    </source>
</evidence>
<evidence type="ECO:0000256" key="2">
    <source>
        <dbReference type="SAM" id="MobiDB-lite"/>
    </source>
</evidence>
<reference key="1">
    <citation type="journal article" date="2009" name="Genome Res.">
        <title>Comparative genomic analyses of the human fungal pathogens Coccidioides and their relatives.</title>
        <authorList>
            <person name="Sharpton T.J."/>
            <person name="Stajich J.E."/>
            <person name="Rounsley S.D."/>
            <person name="Gardner M.J."/>
            <person name="Wortman J.R."/>
            <person name="Jordar V.S."/>
            <person name="Maiti R."/>
            <person name="Kodira C.D."/>
            <person name="Neafsey D.E."/>
            <person name="Zeng Q."/>
            <person name="Hung C.-Y."/>
            <person name="McMahan C."/>
            <person name="Muszewska A."/>
            <person name="Grynberg M."/>
            <person name="Mandel M.A."/>
            <person name="Kellner E.M."/>
            <person name="Barker B.M."/>
            <person name="Galgiani J.N."/>
            <person name="Orbach M.J."/>
            <person name="Kirkland T.N."/>
            <person name="Cole G.T."/>
            <person name="Henn M.R."/>
            <person name="Birren B.W."/>
            <person name="Taylor J.W."/>
        </authorList>
    </citation>
    <scope>NUCLEOTIDE SEQUENCE [LARGE SCALE GENOMIC DNA]</scope>
    <source>
        <strain>RS</strain>
    </source>
</reference>
<reference key="2">
    <citation type="journal article" date="2010" name="Genome Res.">
        <title>Population genomic sequencing of Coccidioides fungi reveals recent hybridization and transposon control.</title>
        <authorList>
            <person name="Neafsey D.E."/>
            <person name="Barker B.M."/>
            <person name="Sharpton T.J."/>
            <person name="Stajich J.E."/>
            <person name="Park D.J."/>
            <person name="Whiston E."/>
            <person name="Hung C.-Y."/>
            <person name="McMahan C."/>
            <person name="White J."/>
            <person name="Sykes S."/>
            <person name="Heiman D."/>
            <person name="Young S."/>
            <person name="Zeng Q."/>
            <person name="Abouelleil A."/>
            <person name="Aftuck L."/>
            <person name="Bessette D."/>
            <person name="Brown A."/>
            <person name="FitzGerald M."/>
            <person name="Lui A."/>
            <person name="Macdonald J.P."/>
            <person name="Priest M."/>
            <person name="Orbach M.J."/>
            <person name="Galgiani J.N."/>
            <person name="Kirkland T.N."/>
            <person name="Cole G.T."/>
            <person name="Birren B.W."/>
            <person name="Henn M.R."/>
            <person name="Taylor J.W."/>
            <person name="Rounsley S.D."/>
        </authorList>
    </citation>
    <scope>GENOME REANNOTATION</scope>
    <source>
        <strain>RS</strain>
    </source>
</reference>
<protein>
    <recommendedName>
        <fullName evidence="1">Ribosome biogenesis protein ERB1</fullName>
    </recommendedName>
    <alternativeName>
        <fullName evidence="1">Eukaryotic ribosome biogenesis protein 1</fullName>
    </alternativeName>
</protein>
<name>ERB1_COCIM</name>
<proteinExistence type="inferred from homology"/>
<gene>
    <name evidence="1" type="primary">ERB1</name>
    <name type="ORF">CIMG_07147</name>
</gene>
<comment type="function">
    <text evidence="1">Component of the NOP7 complex, which is required for maturation of the 25S and 5.8S ribosomal RNAs and formation of the 60S ribosome.</text>
</comment>
<comment type="subunit">
    <text evidence="1">Component of the NOP7 complex, composed of ERB1, NOP7 and YTM1. The complex is held together by ERB1, which interacts with NOP7 via its N-terminal domain and with YTM1 via a high-affinity interaction between the seven-bladed beta-propeller domains of the 2 proteins. The NOP7 complex associates with the 66S pre-ribosome.</text>
</comment>
<comment type="subcellular location">
    <subcellularLocation>
        <location evidence="1">Nucleus</location>
        <location evidence="1">Nucleolus</location>
    </subcellularLocation>
    <subcellularLocation>
        <location evidence="1">Nucleus</location>
        <location evidence="1">Nucleoplasm</location>
    </subcellularLocation>
</comment>
<comment type="similarity">
    <text evidence="1">Belongs to the WD repeat BOP1/ERB1 family.</text>
</comment>